<feature type="chain" id="PRO_0000189124" description="1-deoxy-D-xylulose-5-phosphate synthase">
    <location>
        <begin position="1"/>
        <end position="634"/>
    </location>
</feature>
<feature type="binding site" evidence="1">
    <location>
        <position position="77"/>
    </location>
    <ligand>
        <name>thiamine diphosphate</name>
        <dbReference type="ChEBI" id="CHEBI:58937"/>
    </ligand>
</feature>
<feature type="binding site" evidence="1">
    <location>
        <begin position="118"/>
        <end position="120"/>
    </location>
    <ligand>
        <name>thiamine diphosphate</name>
        <dbReference type="ChEBI" id="CHEBI:58937"/>
    </ligand>
</feature>
<feature type="binding site" evidence="1">
    <location>
        <position position="149"/>
    </location>
    <ligand>
        <name>Mg(2+)</name>
        <dbReference type="ChEBI" id="CHEBI:18420"/>
    </ligand>
</feature>
<feature type="binding site" evidence="1">
    <location>
        <begin position="150"/>
        <end position="151"/>
    </location>
    <ligand>
        <name>thiamine diphosphate</name>
        <dbReference type="ChEBI" id="CHEBI:58937"/>
    </ligand>
</feature>
<feature type="binding site" evidence="1">
    <location>
        <position position="178"/>
    </location>
    <ligand>
        <name>Mg(2+)</name>
        <dbReference type="ChEBI" id="CHEBI:18420"/>
    </ligand>
</feature>
<feature type="binding site" evidence="1">
    <location>
        <position position="178"/>
    </location>
    <ligand>
        <name>thiamine diphosphate</name>
        <dbReference type="ChEBI" id="CHEBI:58937"/>
    </ligand>
</feature>
<feature type="binding site" evidence="1">
    <location>
        <position position="289"/>
    </location>
    <ligand>
        <name>thiamine diphosphate</name>
        <dbReference type="ChEBI" id="CHEBI:58937"/>
    </ligand>
</feature>
<feature type="binding site" evidence="1">
    <location>
        <position position="371"/>
    </location>
    <ligand>
        <name>thiamine diphosphate</name>
        <dbReference type="ChEBI" id="CHEBI:58937"/>
    </ligand>
</feature>
<dbReference type="EC" id="2.2.1.7" evidence="1"/>
<dbReference type="EMBL" id="AE016823">
    <property type="protein sequence ID" value="AAS69477.1"/>
    <property type="molecule type" value="Genomic_DNA"/>
</dbReference>
<dbReference type="RefSeq" id="WP_001183723.1">
    <property type="nucleotide sequence ID" value="NC_005823.1"/>
</dbReference>
<dbReference type="SMR" id="Q72U01"/>
<dbReference type="GeneID" id="61144195"/>
<dbReference type="KEGG" id="lic:LIC_10863"/>
<dbReference type="HOGENOM" id="CLU_009227_1_4_12"/>
<dbReference type="UniPathway" id="UPA00064">
    <property type="reaction ID" value="UER00091"/>
</dbReference>
<dbReference type="Proteomes" id="UP000007037">
    <property type="component" value="Chromosome I"/>
</dbReference>
<dbReference type="GO" id="GO:0005829">
    <property type="term" value="C:cytosol"/>
    <property type="evidence" value="ECO:0007669"/>
    <property type="project" value="TreeGrafter"/>
</dbReference>
<dbReference type="GO" id="GO:0008661">
    <property type="term" value="F:1-deoxy-D-xylulose-5-phosphate synthase activity"/>
    <property type="evidence" value="ECO:0007669"/>
    <property type="project" value="UniProtKB-UniRule"/>
</dbReference>
<dbReference type="GO" id="GO:0000287">
    <property type="term" value="F:magnesium ion binding"/>
    <property type="evidence" value="ECO:0007669"/>
    <property type="project" value="UniProtKB-UniRule"/>
</dbReference>
<dbReference type="GO" id="GO:0030976">
    <property type="term" value="F:thiamine pyrophosphate binding"/>
    <property type="evidence" value="ECO:0007669"/>
    <property type="project" value="UniProtKB-UniRule"/>
</dbReference>
<dbReference type="GO" id="GO:0052865">
    <property type="term" value="P:1-deoxy-D-xylulose 5-phosphate biosynthetic process"/>
    <property type="evidence" value="ECO:0007669"/>
    <property type="project" value="UniProtKB-UniPathway"/>
</dbReference>
<dbReference type="GO" id="GO:0019288">
    <property type="term" value="P:isopentenyl diphosphate biosynthetic process, methylerythritol 4-phosphate pathway"/>
    <property type="evidence" value="ECO:0007669"/>
    <property type="project" value="TreeGrafter"/>
</dbReference>
<dbReference type="GO" id="GO:0016114">
    <property type="term" value="P:terpenoid biosynthetic process"/>
    <property type="evidence" value="ECO:0007669"/>
    <property type="project" value="UniProtKB-UniRule"/>
</dbReference>
<dbReference type="GO" id="GO:0009228">
    <property type="term" value="P:thiamine biosynthetic process"/>
    <property type="evidence" value="ECO:0007669"/>
    <property type="project" value="UniProtKB-UniRule"/>
</dbReference>
<dbReference type="CDD" id="cd02007">
    <property type="entry name" value="TPP_DXS"/>
    <property type="match status" value="1"/>
</dbReference>
<dbReference type="CDD" id="cd07033">
    <property type="entry name" value="TPP_PYR_DXS_TK_like"/>
    <property type="match status" value="1"/>
</dbReference>
<dbReference type="FunFam" id="3.40.50.970:FF:000060">
    <property type="entry name" value="1-deoxy-D-xylulose-5-phosphate synthase"/>
    <property type="match status" value="1"/>
</dbReference>
<dbReference type="Gene3D" id="3.40.50.920">
    <property type="match status" value="1"/>
</dbReference>
<dbReference type="Gene3D" id="3.40.50.970">
    <property type="match status" value="2"/>
</dbReference>
<dbReference type="HAMAP" id="MF_00315">
    <property type="entry name" value="DXP_synth"/>
    <property type="match status" value="1"/>
</dbReference>
<dbReference type="InterPro" id="IPR005477">
    <property type="entry name" value="Dxylulose-5-P_synthase"/>
</dbReference>
<dbReference type="InterPro" id="IPR029061">
    <property type="entry name" value="THDP-binding"/>
</dbReference>
<dbReference type="InterPro" id="IPR009014">
    <property type="entry name" value="Transketo_C/PFOR_II"/>
</dbReference>
<dbReference type="InterPro" id="IPR005475">
    <property type="entry name" value="Transketolase-like_Pyr-bd"/>
</dbReference>
<dbReference type="InterPro" id="IPR033248">
    <property type="entry name" value="Transketolase_C"/>
</dbReference>
<dbReference type="InterPro" id="IPR049557">
    <property type="entry name" value="Transketolase_CS"/>
</dbReference>
<dbReference type="NCBIfam" id="TIGR00204">
    <property type="entry name" value="dxs"/>
    <property type="match status" value="1"/>
</dbReference>
<dbReference type="NCBIfam" id="NF003933">
    <property type="entry name" value="PRK05444.2-2"/>
    <property type="match status" value="1"/>
</dbReference>
<dbReference type="PANTHER" id="PTHR43322">
    <property type="entry name" value="1-D-DEOXYXYLULOSE 5-PHOSPHATE SYNTHASE-RELATED"/>
    <property type="match status" value="1"/>
</dbReference>
<dbReference type="PANTHER" id="PTHR43322:SF5">
    <property type="entry name" value="1-DEOXY-D-XYLULOSE-5-PHOSPHATE SYNTHASE, CHLOROPLASTIC"/>
    <property type="match status" value="1"/>
</dbReference>
<dbReference type="Pfam" id="PF13292">
    <property type="entry name" value="DXP_synthase_N"/>
    <property type="match status" value="1"/>
</dbReference>
<dbReference type="Pfam" id="PF02779">
    <property type="entry name" value="Transket_pyr"/>
    <property type="match status" value="1"/>
</dbReference>
<dbReference type="Pfam" id="PF02780">
    <property type="entry name" value="Transketolase_C"/>
    <property type="match status" value="1"/>
</dbReference>
<dbReference type="SMART" id="SM00861">
    <property type="entry name" value="Transket_pyr"/>
    <property type="match status" value="1"/>
</dbReference>
<dbReference type="SUPFAM" id="SSF52518">
    <property type="entry name" value="Thiamin diphosphate-binding fold (THDP-binding)"/>
    <property type="match status" value="2"/>
</dbReference>
<dbReference type="SUPFAM" id="SSF52922">
    <property type="entry name" value="TK C-terminal domain-like"/>
    <property type="match status" value="1"/>
</dbReference>
<dbReference type="PROSITE" id="PS00801">
    <property type="entry name" value="TRANSKETOLASE_1"/>
    <property type="match status" value="1"/>
</dbReference>
<accession>Q72U01</accession>
<name>DXS_LEPIC</name>
<reference key="1">
    <citation type="journal article" date="2004" name="J. Bacteriol.">
        <title>Comparative genomics of two Leptospira interrogans serovars reveals novel insights into physiology and pathogenesis.</title>
        <authorList>
            <person name="Nascimento A.L.T.O."/>
            <person name="Ko A.I."/>
            <person name="Martins E.A.L."/>
            <person name="Monteiro-Vitorello C.B."/>
            <person name="Ho P.L."/>
            <person name="Haake D.A."/>
            <person name="Verjovski-Almeida S."/>
            <person name="Hartskeerl R.A."/>
            <person name="Marques M.V."/>
            <person name="Oliveira M.C."/>
            <person name="Menck C.F.M."/>
            <person name="Leite L.C.C."/>
            <person name="Carrer H."/>
            <person name="Coutinho L.L."/>
            <person name="Degrave W.M."/>
            <person name="Dellagostin O.A."/>
            <person name="El-Dorry H."/>
            <person name="Ferro E.S."/>
            <person name="Ferro M.I.T."/>
            <person name="Furlan L.R."/>
            <person name="Gamberini M."/>
            <person name="Giglioti E.A."/>
            <person name="Goes-Neto A."/>
            <person name="Goldman G.H."/>
            <person name="Goldman M.H.S."/>
            <person name="Harakava R."/>
            <person name="Jeronimo S.M.B."/>
            <person name="Junqueira-de-Azevedo I.L.M."/>
            <person name="Kimura E.T."/>
            <person name="Kuramae E.E."/>
            <person name="Lemos E.G.M."/>
            <person name="Lemos M.V.F."/>
            <person name="Marino C.L."/>
            <person name="Nunes L.R."/>
            <person name="de Oliveira R.C."/>
            <person name="Pereira G.G."/>
            <person name="Reis M.S."/>
            <person name="Schriefer A."/>
            <person name="Siqueira W.J."/>
            <person name="Sommer P."/>
            <person name="Tsai S.M."/>
            <person name="Simpson A.J.G."/>
            <person name="Ferro J.A."/>
            <person name="Camargo L.E.A."/>
            <person name="Kitajima J.P."/>
            <person name="Setubal J.C."/>
            <person name="Van Sluys M.A."/>
        </authorList>
    </citation>
    <scope>NUCLEOTIDE SEQUENCE [LARGE SCALE GENOMIC DNA]</scope>
    <source>
        <strain>Fiocruz L1-130</strain>
    </source>
</reference>
<evidence type="ECO:0000255" key="1">
    <source>
        <dbReference type="HAMAP-Rule" id="MF_00315"/>
    </source>
</evidence>
<proteinExistence type="inferred from homology"/>
<sequence>MQQELTLLDRINYPAELRNIPLEKLPQICKEVRNYIIDTLSGIGGHFASNLGVVELTVALHYVFDTPKDRLVWDVGHQTYPHKILTGRKDKLNTVRKFNGLSGFPKREESPYDLYNTGHAGTSISQALGEAAARDLVKENYNVVAIIGDASIATGMALEAMNHAGHLKKDMIVILNDNYMSISKNVGSISNYLNNIITSHFYNHWKRVFYTFLKWLPIIGPATERFFKKVEKGFKDVLTPGGLFEDLGFGYIGPEDGHDVIRLVKMLEKVKKMKGPILLHIITQKGKGYDPAERDPIKYHGVTPFRKEDGAMDSGDTSKIAYSKIVGKMLAILTETNPKIAAITPAMIEGSGLKEYAEKYPEHLFDVGIAEQHSVAFAGAMTNGNIIPYMCIYSTFLTRAMDQLVQDVSLMNLPVRFVIDRAGCVGPDGETHQGLFDLGYLLGLPNMDVFVPSNGQDLIDALRWMEKYDKSPVAIRFPKSSVDLKTLDFYKETELQPGTFRVFKRGTDVALISIGSMIDEAKKASERLENEGLSVTLIDLVWLRPLGAEALNEELVNVRCFVILDESYIDSGVTGYLLNRMTRENLSKYIKTFGFPPEPIHHGERKEVFQKYRLDGESIAEQVAAVLKKNLIKP</sequence>
<keyword id="KW-0414">Isoprene biosynthesis</keyword>
<keyword id="KW-0460">Magnesium</keyword>
<keyword id="KW-0479">Metal-binding</keyword>
<keyword id="KW-0784">Thiamine biosynthesis</keyword>
<keyword id="KW-0786">Thiamine pyrophosphate</keyword>
<keyword id="KW-0808">Transferase</keyword>
<organism>
    <name type="scientific">Leptospira interrogans serogroup Icterohaemorrhagiae serovar copenhageni (strain Fiocruz L1-130)</name>
    <dbReference type="NCBI Taxonomy" id="267671"/>
    <lineage>
        <taxon>Bacteria</taxon>
        <taxon>Pseudomonadati</taxon>
        <taxon>Spirochaetota</taxon>
        <taxon>Spirochaetia</taxon>
        <taxon>Leptospirales</taxon>
        <taxon>Leptospiraceae</taxon>
        <taxon>Leptospira</taxon>
    </lineage>
</organism>
<protein>
    <recommendedName>
        <fullName evidence="1">1-deoxy-D-xylulose-5-phosphate synthase</fullName>
        <ecNumber evidence="1">2.2.1.7</ecNumber>
    </recommendedName>
    <alternativeName>
        <fullName evidence="1">1-deoxyxylulose-5-phosphate synthase</fullName>
        <shortName evidence="1">DXP synthase</shortName>
        <shortName evidence="1">DXPS</shortName>
    </alternativeName>
</protein>
<comment type="function">
    <text evidence="1">Catalyzes the acyloin condensation reaction between C atoms 2 and 3 of pyruvate and glyceraldehyde 3-phosphate to yield 1-deoxy-D-xylulose-5-phosphate (DXP).</text>
</comment>
<comment type="catalytic activity">
    <reaction evidence="1">
        <text>D-glyceraldehyde 3-phosphate + pyruvate + H(+) = 1-deoxy-D-xylulose 5-phosphate + CO2</text>
        <dbReference type="Rhea" id="RHEA:12605"/>
        <dbReference type="ChEBI" id="CHEBI:15361"/>
        <dbReference type="ChEBI" id="CHEBI:15378"/>
        <dbReference type="ChEBI" id="CHEBI:16526"/>
        <dbReference type="ChEBI" id="CHEBI:57792"/>
        <dbReference type="ChEBI" id="CHEBI:59776"/>
        <dbReference type="EC" id="2.2.1.7"/>
    </reaction>
</comment>
<comment type="cofactor">
    <cofactor evidence="1">
        <name>Mg(2+)</name>
        <dbReference type="ChEBI" id="CHEBI:18420"/>
    </cofactor>
    <text evidence="1">Binds 1 Mg(2+) ion per subunit.</text>
</comment>
<comment type="cofactor">
    <cofactor evidence="1">
        <name>thiamine diphosphate</name>
        <dbReference type="ChEBI" id="CHEBI:58937"/>
    </cofactor>
    <text evidence="1">Binds 1 thiamine pyrophosphate per subunit.</text>
</comment>
<comment type="pathway">
    <text evidence="1">Metabolic intermediate biosynthesis; 1-deoxy-D-xylulose 5-phosphate biosynthesis; 1-deoxy-D-xylulose 5-phosphate from D-glyceraldehyde 3-phosphate and pyruvate: step 1/1.</text>
</comment>
<comment type="subunit">
    <text evidence="1">Homodimer.</text>
</comment>
<comment type="similarity">
    <text evidence="1">Belongs to the transketolase family. DXPS subfamily.</text>
</comment>
<gene>
    <name evidence="1" type="primary">dxs</name>
    <name type="ordered locus">LIC_10863</name>
</gene>